<name>CLD16_BOVIN</name>
<protein>
    <recommendedName>
        <fullName evidence="6">Claudin-16</fullName>
        <shortName evidence="6">CL-16</shortName>
    </recommendedName>
    <alternativeName>
        <fullName evidence="6">Paracellin-1</fullName>
        <shortName evidence="6">PCLN-1</shortName>
    </alternativeName>
</protein>
<dbReference type="EMBL" id="AB030082">
    <property type="protein sequence ID" value="BAA82553.1"/>
    <property type="molecule type" value="mRNA"/>
</dbReference>
<dbReference type="RefSeq" id="NP_776944.1">
    <property type="nucleotide sequence ID" value="NM_174519.2"/>
</dbReference>
<dbReference type="SMR" id="Q9XT98"/>
<dbReference type="FunCoup" id="Q9XT98">
    <property type="interactions" value="182"/>
</dbReference>
<dbReference type="STRING" id="9913.ENSBTAP00000008509"/>
<dbReference type="PaxDb" id="9913-ENSBTAP00000008509"/>
<dbReference type="Ensembl" id="ENSBTAT00000008509.5">
    <property type="protein sequence ID" value="ENSBTAP00000008509.4"/>
    <property type="gene ID" value="ENSBTAG00000006494.6"/>
</dbReference>
<dbReference type="GeneID" id="282184"/>
<dbReference type="KEGG" id="bta:282184"/>
<dbReference type="CTD" id="10686"/>
<dbReference type="VEuPathDB" id="HostDB:ENSBTAG00000006494"/>
<dbReference type="VGNC" id="VGNC:27406">
    <property type="gene designation" value="CLDN16"/>
</dbReference>
<dbReference type="eggNOG" id="ENOG502QRY9">
    <property type="taxonomic scope" value="Eukaryota"/>
</dbReference>
<dbReference type="GeneTree" id="ENSGT00730000111162"/>
<dbReference type="HOGENOM" id="CLU_079378_0_0_1"/>
<dbReference type="InParanoid" id="Q9XT98"/>
<dbReference type="OMA" id="GLHCVKF"/>
<dbReference type="OrthoDB" id="8498983at2759"/>
<dbReference type="TreeFam" id="TF331936"/>
<dbReference type="Proteomes" id="UP000009136">
    <property type="component" value="Chromosome 1"/>
</dbReference>
<dbReference type="Bgee" id="ENSBTAG00000006494">
    <property type="expression patterns" value="Expressed in adult mammalian kidney and 17 other cell types or tissues"/>
</dbReference>
<dbReference type="GO" id="GO:0005923">
    <property type="term" value="C:bicellular tight junction"/>
    <property type="evidence" value="ECO:0000250"/>
    <property type="project" value="UniProtKB"/>
</dbReference>
<dbReference type="GO" id="GO:0005886">
    <property type="term" value="C:plasma membrane"/>
    <property type="evidence" value="ECO:0000318"/>
    <property type="project" value="GO_Central"/>
</dbReference>
<dbReference type="GO" id="GO:0070160">
    <property type="term" value="C:tight junction"/>
    <property type="evidence" value="ECO:0000250"/>
    <property type="project" value="UniProtKB"/>
</dbReference>
<dbReference type="GO" id="GO:0042802">
    <property type="term" value="F:identical protein binding"/>
    <property type="evidence" value="ECO:0000250"/>
    <property type="project" value="UniProtKB"/>
</dbReference>
<dbReference type="GO" id="GO:0160187">
    <property type="term" value="F:paracellular tight junction channel activity"/>
    <property type="evidence" value="ECO:0000250"/>
    <property type="project" value="UniProtKB"/>
</dbReference>
<dbReference type="GO" id="GO:0030165">
    <property type="term" value="F:PDZ domain binding"/>
    <property type="evidence" value="ECO:0000250"/>
    <property type="project" value="UniProtKB"/>
</dbReference>
<dbReference type="GO" id="GO:0005198">
    <property type="term" value="F:structural molecule activity"/>
    <property type="evidence" value="ECO:0007669"/>
    <property type="project" value="InterPro"/>
</dbReference>
<dbReference type="GO" id="GO:0070830">
    <property type="term" value="P:bicellular tight junction assembly"/>
    <property type="evidence" value="ECO:0000318"/>
    <property type="project" value="GO_Central"/>
</dbReference>
<dbReference type="GO" id="GO:0016338">
    <property type="term" value="P:calcium-independent cell-cell adhesion via plasma membrane cell-adhesion molecules"/>
    <property type="evidence" value="ECO:0000250"/>
    <property type="project" value="UniProtKB"/>
</dbReference>
<dbReference type="GO" id="GO:0007155">
    <property type="term" value="P:cell adhesion"/>
    <property type="evidence" value="ECO:0000318"/>
    <property type="project" value="GO_Central"/>
</dbReference>
<dbReference type="GO" id="GO:0006811">
    <property type="term" value="P:monoatomic ion transport"/>
    <property type="evidence" value="ECO:0007669"/>
    <property type="project" value="UniProtKB-KW"/>
</dbReference>
<dbReference type="GO" id="GO:0160184">
    <property type="term" value="P:paracellular transport"/>
    <property type="evidence" value="ECO:0000250"/>
    <property type="project" value="UniProtKB"/>
</dbReference>
<dbReference type="GO" id="GO:0070293">
    <property type="term" value="P:renal absorption"/>
    <property type="evidence" value="ECO:0000250"/>
    <property type="project" value="UniProtKB"/>
</dbReference>
<dbReference type="FunFam" id="1.20.140.150:FF:000012">
    <property type="entry name" value="Claudin"/>
    <property type="match status" value="1"/>
</dbReference>
<dbReference type="Gene3D" id="1.20.140.150">
    <property type="match status" value="1"/>
</dbReference>
<dbReference type="InterPro" id="IPR006187">
    <property type="entry name" value="Claudin"/>
</dbReference>
<dbReference type="InterPro" id="IPR003927">
    <property type="entry name" value="Claudin16"/>
</dbReference>
<dbReference type="InterPro" id="IPR017974">
    <property type="entry name" value="Claudin_CS"/>
</dbReference>
<dbReference type="InterPro" id="IPR004031">
    <property type="entry name" value="PMP22/EMP/MP20/Claudin"/>
</dbReference>
<dbReference type="PANTHER" id="PTHR12002">
    <property type="entry name" value="CLAUDIN"/>
    <property type="match status" value="1"/>
</dbReference>
<dbReference type="Pfam" id="PF00822">
    <property type="entry name" value="PMP22_Claudin"/>
    <property type="match status" value="1"/>
</dbReference>
<dbReference type="PRINTS" id="PR01077">
    <property type="entry name" value="CLAUDIN"/>
</dbReference>
<dbReference type="PRINTS" id="PR01447">
    <property type="entry name" value="CLAUDIN16"/>
</dbReference>
<dbReference type="PROSITE" id="PS01346">
    <property type="entry name" value="CLAUDIN"/>
    <property type="match status" value="1"/>
</dbReference>
<organism>
    <name type="scientific">Bos taurus</name>
    <name type="common">Bovine</name>
    <dbReference type="NCBI Taxonomy" id="9913"/>
    <lineage>
        <taxon>Eukaryota</taxon>
        <taxon>Metazoa</taxon>
        <taxon>Chordata</taxon>
        <taxon>Craniata</taxon>
        <taxon>Vertebrata</taxon>
        <taxon>Euteleostomi</taxon>
        <taxon>Mammalia</taxon>
        <taxon>Eutheria</taxon>
        <taxon>Laurasiatheria</taxon>
        <taxon>Artiodactyla</taxon>
        <taxon>Ruminantia</taxon>
        <taxon>Pecora</taxon>
        <taxon>Bovidae</taxon>
        <taxon>Bovinae</taxon>
        <taxon>Bos</taxon>
    </lineage>
</organism>
<feature type="chain" id="PRO_0000144773" description="Claudin-16">
    <location>
        <begin position="1"/>
        <end position="254"/>
    </location>
</feature>
<feature type="topological domain" description="Cytoplasmic" evidence="4">
    <location>
        <begin position="1"/>
        <end position="22"/>
    </location>
</feature>
<feature type="transmembrane region" description="Helical" evidence="4">
    <location>
        <begin position="23"/>
        <end position="43"/>
    </location>
</feature>
<feature type="topological domain" description="Extracellular" evidence="4">
    <location>
        <begin position="44"/>
        <end position="98"/>
    </location>
</feature>
<feature type="transmembrane region" description="Helical" evidence="4">
    <location>
        <begin position="99"/>
        <end position="119"/>
    </location>
</feature>
<feature type="topological domain" description="Cytoplasmic" evidence="4">
    <location>
        <begin position="120"/>
        <end position="134"/>
    </location>
</feature>
<feature type="transmembrane region" description="Helical" evidence="4">
    <location>
        <begin position="135"/>
        <end position="155"/>
    </location>
</feature>
<feature type="topological domain" description="Extracellular" evidence="4">
    <location>
        <begin position="156"/>
        <end position="188"/>
    </location>
</feature>
<feature type="transmembrane region" description="Helical" evidence="4">
    <location>
        <begin position="189"/>
        <end position="209"/>
    </location>
</feature>
<feature type="topological domain" description="Cytoplasmic" evidence="4">
    <location>
        <begin position="210"/>
        <end position="254"/>
    </location>
</feature>
<feature type="short sequence motif" description="Interaction with TJP1" evidence="1">
    <location>
        <begin position="252"/>
        <end position="254"/>
    </location>
</feature>
<sequence length="254" mass="27992">MGPGLAASHVSFPDSLLAKMRDLLQYVACFFAFFSAGFLVVATWTDCWMVNADDSLEVSTKCRGLWWECVTNAFDGIRTCDEYDSILAEHSLKLVVTRALMITADILAGFGFITLLLGLDCVKFLPDEPYIKVRISFVAGTTLLIAGAPGIIGSVWYAVDVYVERSSLVLHNIFLGIQYKFGWSCWLGMAGSLGCFLAGAILTCCLYLFKDVGPERSYPYSTRKAYSTTAVSMPRSHAIPRTQTAKMYAVDTRV</sequence>
<accession>Q9XT98</accession>
<keyword id="KW-0965">Cell junction</keyword>
<keyword id="KW-1003">Cell membrane</keyword>
<keyword id="KW-0406">Ion transport</keyword>
<keyword id="KW-0460">Magnesium</keyword>
<keyword id="KW-0472">Membrane</keyword>
<keyword id="KW-1185">Reference proteome</keyword>
<keyword id="KW-0796">Tight junction</keyword>
<keyword id="KW-0812">Transmembrane</keyword>
<keyword id="KW-1133">Transmembrane helix</keyword>
<keyword id="KW-0813">Transport</keyword>
<comment type="function">
    <text evidence="2 3">Forms paracellular channels: coassembles with CLDN19 into tight junction strands with cation-selective channels through the strands, conveying epithelial permeability in a process known as paracellular tight junction permeability (By similarity). Involved in the maintenance of ion gradients along the nephron. In the thick ascending limb (TAL) of Henle's loop, facilitates sodium paracellular permeability from the interstitial compartment to the lumen, contributing to the lumen-positive transepithelial potential that drives paracellular magnesium and calcium reabsorption (By similarity).</text>
</comment>
<comment type="catalytic activity">
    <reaction evidence="3">
        <text>Mg(2+)(in) = Mg(2+)(out)</text>
        <dbReference type="Rhea" id="RHEA:29827"/>
        <dbReference type="ChEBI" id="CHEBI:18420"/>
    </reaction>
</comment>
<comment type="catalytic activity">
    <reaction evidence="2">
        <text>Ca(2+)(in) = Ca(2+)(out)</text>
        <dbReference type="Rhea" id="RHEA:29671"/>
        <dbReference type="ChEBI" id="CHEBI:29108"/>
    </reaction>
</comment>
<comment type="catalytic activity">
    <reaction evidence="3">
        <text>Na(+)(in) = Na(+)(out)</text>
        <dbReference type="Rhea" id="RHEA:34963"/>
        <dbReference type="ChEBI" id="CHEBI:29101"/>
    </reaction>
</comment>
<comment type="catalytic activity">
    <reaction evidence="3">
        <text>K(+)(in) = K(+)(out)</text>
        <dbReference type="Rhea" id="RHEA:29463"/>
        <dbReference type="ChEBI" id="CHEBI:29103"/>
    </reaction>
</comment>
<comment type="catalytic activity">
    <reaction evidence="3">
        <text>Rb(+)(in) = Rb(+)(out)</text>
        <dbReference type="Rhea" id="RHEA:78547"/>
        <dbReference type="ChEBI" id="CHEBI:49847"/>
    </reaction>
</comment>
<comment type="catalytic activity">
    <reaction evidence="3">
        <text>Cs(+)(in) = Cs(+)(out)</text>
        <dbReference type="Rhea" id="RHEA:78555"/>
        <dbReference type="ChEBI" id="CHEBI:49547"/>
    </reaction>
</comment>
<comment type="catalytic activity">
    <reaction evidence="2">
        <text>Li(+)(in) = Li(+)(out)</text>
        <dbReference type="Rhea" id="RHEA:78551"/>
        <dbReference type="ChEBI" id="CHEBI:49713"/>
    </reaction>
</comment>
<comment type="subunit">
    <text evidence="1 3">Can form heteropolymeric tight junction strands with other claudins. Interacts with CLDN19 (By similarity). Interacts (via PDZ-binding motif TRV) with TJP1 (via PDZ domain) (By similarity). Cannot form tight junction strands on its own (By similarity).</text>
</comment>
<comment type="subcellular location">
    <subcellularLocation>
        <location evidence="3">Cell junction</location>
        <location evidence="3">Tight junction</location>
    </subcellularLocation>
    <subcellularLocation>
        <location evidence="3">Cell membrane</location>
        <topology evidence="4">Multi-pass membrane protein</topology>
    </subcellularLocation>
    <text evidence="3">Cotrafficks with CLDN19 from ER to tight junctions.</text>
</comment>
<comment type="tissue specificity">
    <text evidence="5">Expressed preferentially in kidney.</text>
</comment>
<comment type="domain">
    <text evidence="3">The first extracellular loop contains negatively charged amino acids that affect cation selectivity.</text>
</comment>
<comment type="disease">
    <text evidence="5">Defects in CLDN16 are a cause of an autosomal recessive chronic interstitial nephritis with diffuse zonal fibrosis (CINF). CINF is characterized by increased blood urea nitrogen, creatinine, and urinary proteins, leads to lethality before puberty, usually within the first 6 months or year of life.</text>
</comment>
<comment type="similarity">
    <text evidence="7">Belongs to the claudin family.</text>
</comment>
<reference key="1">
    <citation type="journal article" date="2000" name="Genome Res.">
        <title>Null mutation of PCLN-1/claudin-16 results in bovine chronic interstitial nephritis.</title>
        <authorList>
            <person name="Hirano T."/>
            <person name="Kobayashi N."/>
            <person name="Itoh T."/>
            <person name="Takasuga A."/>
            <person name="Nakamaru T."/>
            <person name="Hirotsune S."/>
            <person name="Sugimoto Y."/>
        </authorList>
    </citation>
    <scope>NUCLEOTIDE SEQUENCE [MRNA]</scope>
    <scope>INVOLVEMENT IN CINF</scope>
    <scope>TISSUE SPECIFICITY</scope>
</reference>
<evidence type="ECO:0000250" key="1">
    <source>
        <dbReference type="UniProtKB" id="Q91Y55"/>
    </source>
</evidence>
<evidence type="ECO:0000250" key="2">
    <source>
        <dbReference type="UniProtKB" id="Q925N4"/>
    </source>
</evidence>
<evidence type="ECO:0000250" key="3">
    <source>
        <dbReference type="UniProtKB" id="Q9Y5I7"/>
    </source>
</evidence>
<evidence type="ECO:0000255" key="4"/>
<evidence type="ECO:0000269" key="5">
    <source>
    </source>
</evidence>
<evidence type="ECO:0000303" key="6">
    <source>
    </source>
</evidence>
<evidence type="ECO:0000305" key="7"/>
<proteinExistence type="evidence at transcript level"/>
<gene>
    <name type="primary">CLDN16</name>
</gene>